<proteinExistence type="inferred from homology"/>
<feature type="chain" id="PRO_0000154643" description="Large ribosomal subunit protein uL10">
    <location>
        <begin position="1"/>
        <end position="172"/>
    </location>
</feature>
<sequence length="172" mass="18461">MAIGLAGKKAIVKEVNDVASNALAVTVAEYRGIEVADMTALRKKAREQGIFVKVVRNTLAKRAFEGTQFDDMGDALKGPLVYGFSMDAPGASARLFKDFSKENKNLQVTALSIGNGIMGPEKLDAVASLPTRDEALAKLLATFKEPVSKFVKTVNEVPSKFVRTLAAIKDAK</sequence>
<keyword id="KW-1185">Reference proteome</keyword>
<keyword id="KW-0687">Ribonucleoprotein</keyword>
<keyword id="KW-0689">Ribosomal protein</keyword>
<keyword id="KW-0694">RNA-binding</keyword>
<keyword id="KW-0699">rRNA-binding</keyword>
<gene>
    <name evidence="1" type="primary">rplJ</name>
    <name type="ordered locus">IL0343</name>
</gene>
<name>RL10_IDILO</name>
<dbReference type="EMBL" id="AE017340">
    <property type="protein sequence ID" value="AAV81186.1"/>
    <property type="molecule type" value="Genomic_DNA"/>
</dbReference>
<dbReference type="RefSeq" id="WP_011233605.1">
    <property type="nucleotide sequence ID" value="NC_006512.1"/>
</dbReference>
<dbReference type="SMR" id="Q5QWA7"/>
<dbReference type="STRING" id="283942.IL0343"/>
<dbReference type="GeneID" id="41335495"/>
<dbReference type="KEGG" id="ilo:IL0343"/>
<dbReference type="eggNOG" id="COG0244">
    <property type="taxonomic scope" value="Bacteria"/>
</dbReference>
<dbReference type="HOGENOM" id="CLU_092227_0_2_6"/>
<dbReference type="OrthoDB" id="9808307at2"/>
<dbReference type="Proteomes" id="UP000001171">
    <property type="component" value="Chromosome"/>
</dbReference>
<dbReference type="GO" id="GO:1990904">
    <property type="term" value="C:ribonucleoprotein complex"/>
    <property type="evidence" value="ECO:0007669"/>
    <property type="project" value="UniProtKB-KW"/>
</dbReference>
<dbReference type="GO" id="GO:0005840">
    <property type="term" value="C:ribosome"/>
    <property type="evidence" value="ECO:0007669"/>
    <property type="project" value="UniProtKB-KW"/>
</dbReference>
<dbReference type="GO" id="GO:0070180">
    <property type="term" value="F:large ribosomal subunit rRNA binding"/>
    <property type="evidence" value="ECO:0007669"/>
    <property type="project" value="UniProtKB-UniRule"/>
</dbReference>
<dbReference type="GO" id="GO:0006412">
    <property type="term" value="P:translation"/>
    <property type="evidence" value="ECO:0007669"/>
    <property type="project" value="UniProtKB-UniRule"/>
</dbReference>
<dbReference type="CDD" id="cd05797">
    <property type="entry name" value="Ribosomal_L10"/>
    <property type="match status" value="1"/>
</dbReference>
<dbReference type="Gene3D" id="3.30.70.1730">
    <property type="match status" value="1"/>
</dbReference>
<dbReference type="Gene3D" id="6.10.250.2350">
    <property type="match status" value="1"/>
</dbReference>
<dbReference type="HAMAP" id="MF_00362">
    <property type="entry name" value="Ribosomal_uL10"/>
    <property type="match status" value="1"/>
</dbReference>
<dbReference type="InterPro" id="IPR001790">
    <property type="entry name" value="Ribosomal_uL10"/>
</dbReference>
<dbReference type="InterPro" id="IPR043141">
    <property type="entry name" value="Ribosomal_uL10-like_sf"/>
</dbReference>
<dbReference type="InterPro" id="IPR022973">
    <property type="entry name" value="Ribosomal_uL10_bac"/>
</dbReference>
<dbReference type="InterPro" id="IPR047865">
    <property type="entry name" value="Ribosomal_uL10_bac_type"/>
</dbReference>
<dbReference type="NCBIfam" id="NF000955">
    <property type="entry name" value="PRK00099.1-1"/>
    <property type="match status" value="1"/>
</dbReference>
<dbReference type="PANTHER" id="PTHR11560">
    <property type="entry name" value="39S RIBOSOMAL PROTEIN L10, MITOCHONDRIAL"/>
    <property type="match status" value="1"/>
</dbReference>
<dbReference type="Pfam" id="PF00466">
    <property type="entry name" value="Ribosomal_L10"/>
    <property type="match status" value="1"/>
</dbReference>
<dbReference type="SUPFAM" id="SSF160369">
    <property type="entry name" value="Ribosomal protein L10-like"/>
    <property type="match status" value="1"/>
</dbReference>
<organism>
    <name type="scientific">Idiomarina loihiensis (strain ATCC BAA-735 / DSM 15497 / L2-TR)</name>
    <dbReference type="NCBI Taxonomy" id="283942"/>
    <lineage>
        <taxon>Bacteria</taxon>
        <taxon>Pseudomonadati</taxon>
        <taxon>Pseudomonadota</taxon>
        <taxon>Gammaproteobacteria</taxon>
        <taxon>Alteromonadales</taxon>
        <taxon>Idiomarinaceae</taxon>
        <taxon>Idiomarina</taxon>
    </lineage>
</organism>
<accession>Q5QWA7</accession>
<comment type="function">
    <text evidence="1">Forms part of the ribosomal stalk, playing a central role in the interaction of the ribosome with GTP-bound translation factors.</text>
</comment>
<comment type="subunit">
    <text evidence="1">Part of the ribosomal stalk of the 50S ribosomal subunit. The N-terminus interacts with L11 and the large rRNA to form the base of the stalk. The C-terminus forms an elongated spine to which L12 dimers bind in a sequential fashion forming a multimeric L10(L12)X complex.</text>
</comment>
<comment type="similarity">
    <text evidence="1">Belongs to the universal ribosomal protein uL10 family.</text>
</comment>
<protein>
    <recommendedName>
        <fullName evidence="1">Large ribosomal subunit protein uL10</fullName>
    </recommendedName>
    <alternativeName>
        <fullName evidence="2">50S ribosomal protein L10</fullName>
    </alternativeName>
</protein>
<reference key="1">
    <citation type="journal article" date="2004" name="Proc. Natl. Acad. Sci. U.S.A.">
        <title>Genome sequence of the deep-sea gamma-proteobacterium Idiomarina loihiensis reveals amino acid fermentation as a source of carbon and energy.</title>
        <authorList>
            <person name="Hou S."/>
            <person name="Saw J.H."/>
            <person name="Lee K.S."/>
            <person name="Freitas T.A."/>
            <person name="Belisle C."/>
            <person name="Kawarabayasi Y."/>
            <person name="Donachie S.P."/>
            <person name="Pikina A."/>
            <person name="Galperin M.Y."/>
            <person name="Koonin E.V."/>
            <person name="Makarova K.S."/>
            <person name="Omelchenko M.V."/>
            <person name="Sorokin A."/>
            <person name="Wolf Y.I."/>
            <person name="Li Q.X."/>
            <person name="Keum Y.S."/>
            <person name="Campbell S."/>
            <person name="Denery J."/>
            <person name="Aizawa S."/>
            <person name="Shibata S."/>
            <person name="Malahoff A."/>
            <person name="Alam M."/>
        </authorList>
    </citation>
    <scope>NUCLEOTIDE SEQUENCE [LARGE SCALE GENOMIC DNA]</scope>
    <source>
        <strain>ATCC BAA-735 / DSM 15497 / L2-TR</strain>
    </source>
</reference>
<evidence type="ECO:0000255" key="1">
    <source>
        <dbReference type="HAMAP-Rule" id="MF_00362"/>
    </source>
</evidence>
<evidence type="ECO:0000305" key="2"/>